<gene>
    <name type="primary">cspC</name>
    <name type="ordered locus">STY1967</name>
    <name type="ordered locus">t1041</name>
</gene>
<proteinExistence type="inferred from homology"/>
<accession>P0A9Z0</accession>
<accession>O68636</accession>
<accession>P36996</accession>
<organism>
    <name type="scientific">Salmonella typhi</name>
    <dbReference type="NCBI Taxonomy" id="90370"/>
    <lineage>
        <taxon>Bacteria</taxon>
        <taxon>Pseudomonadati</taxon>
        <taxon>Pseudomonadota</taxon>
        <taxon>Gammaproteobacteria</taxon>
        <taxon>Enterobacterales</taxon>
        <taxon>Enterobacteriaceae</taxon>
        <taxon>Salmonella</taxon>
    </lineage>
</organism>
<protein>
    <recommendedName>
        <fullName>Cold shock-like protein CspC</fullName>
        <shortName>CSP-C</shortName>
    </recommendedName>
</protein>
<evidence type="ECO:0000250" key="1"/>
<dbReference type="EMBL" id="AL513382">
    <property type="protein sequence ID" value="CAD05519.1"/>
    <property type="molecule type" value="Genomic_DNA"/>
</dbReference>
<dbReference type="EMBL" id="AE014613">
    <property type="protein sequence ID" value="AAO68707.1"/>
    <property type="molecule type" value="Genomic_DNA"/>
</dbReference>
<dbReference type="RefSeq" id="NP_456343.1">
    <property type="nucleotide sequence ID" value="NC_003198.1"/>
</dbReference>
<dbReference type="SMR" id="P0A9Z0"/>
<dbReference type="STRING" id="220341.gene:17585884"/>
<dbReference type="KEGG" id="stt:t1041"/>
<dbReference type="KEGG" id="sty:STY1967"/>
<dbReference type="PATRIC" id="fig|220341.7.peg.1984"/>
<dbReference type="eggNOG" id="COG1278">
    <property type="taxonomic scope" value="Bacteria"/>
</dbReference>
<dbReference type="HOGENOM" id="CLU_117621_2_1_6"/>
<dbReference type="OMA" id="EEIFVHV"/>
<dbReference type="OrthoDB" id="9810590at2"/>
<dbReference type="Proteomes" id="UP000000541">
    <property type="component" value="Chromosome"/>
</dbReference>
<dbReference type="Proteomes" id="UP000002670">
    <property type="component" value="Chromosome"/>
</dbReference>
<dbReference type="GO" id="GO:0005829">
    <property type="term" value="C:cytosol"/>
    <property type="evidence" value="ECO:0007669"/>
    <property type="project" value="UniProtKB-ARBA"/>
</dbReference>
<dbReference type="GO" id="GO:0003677">
    <property type="term" value="F:DNA binding"/>
    <property type="evidence" value="ECO:0007669"/>
    <property type="project" value="UniProtKB-KW"/>
</dbReference>
<dbReference type="CDD" id="cd04458">
    <property type="entry name" value="CSP_CDS"/>
    <property type="match status" value="1"/>
</dbReference>
<dbReference type="FunFam" id="2.40.50.140:FF:000006">
    <property type="entry name" value="Cold shock protein CspC"/>
    <property type="match status" value="1"/>
</dbReference>
<dbReference type="Gene3D" id="2.40.50.140">
    <property type="entry name" value="Nucleic acid-binding proteins"/>
    <property type="match status" value="1"/>
</dbReference>
<dbReference type="InterPro" id="IPR012156">
    <property type="entry name" value="Cold_shock_CspA"/>
</dbReference>
<dbReference type="InterPro" id="IPR050181">
    <property type="entry name" value="Cold_shock_domain"/>
</dbReference>
<dbReference type="InterPro" id="IPR011129">
    <property type="entry name" value="CSD"/>
</dbReference>
<dbReference type="InterPro" id="IPR019844">
    <property type="entry name" value="CSD_CS"/>
</dbReference>
<dbReference type="InterPro" id="IPR002059">
    <property type="entry name" value="CSP_DNA-bd"/>
</dbReference>
<dbReference type="InterPro" id="IPR012340">
    <property type="entry name" value="NA-bd_OB-fold"/>
</dbReference>
<dbReference type="NCBIfam" id="NF007062">
    <property type="entry name" value="PRK09507.1"/>
    <property type="match status" value="1"/>
</dbReference>
<dbReference type="NCBIfam" id="NF008190">
    <property type="entry name" value="PRK10943.1"/>
    <property type="match status" value="1"/>
</dbReference>
<dbReference type="PANTHER" id="PTHR11544">
    <property type="entry name" value="COLD SHOCK DOMAIN CONTAINING PROTEINS"/>
    <property type="match status" value="1"/>
</dbReference>
<dbReference type="Pfam" id="PF00313">
    <property type="entry name" value="CSD"/>
    <property type="match status" value="1"/>
</dbReference>
<dbReference type="PIRSF" id="PIRSF002599">
    <property type="entry name" value="Cold_shock_A"/>
    <property type="match status" value="1"/>
</dbReference>
<dbReference type="PRINTS" id="PR00050">
    <property type="entry name" value="COLDSHOCK"/>
</dbReference>
<dbReference type="SMART" id="SM00357">
    <property type="entry name" value="CSP"/>
    <property type="match status" value="1"/>
</dbReference>
<dbReference type="SUPFAM" id="SSF50249">
    <property type="entry name" value="Nucleic acid-binding proteins"/>
    <property type="match status" value="1"/>
</dbReference>
<dbReference type="PROSITE" id="PS00352">
    <property type="entry name" value="CSD_1"/>
    <property type="match status" value="1"/>
</dbReference>
<dbReference type="PROSITE" id="PS51857">
    <property type="entry name" value="CSD_2"/>
    <property type="match status" value="1"/>
</dbReference>
<comment type="subcellular location">
    <subcellularLocation>
        <location evidence="1">Cytoplasm</location>
    </subcellularLocation>
</comment>
<feature type="initiator methionine" description="Removed" evidence="1">
    <location>
        <position position="1"/>
    </location>
</feature>
<feature type="chain" id="PRO_0000100244" description="Cold shock-like protein CspC">
    <location>
        <begin position="2"/>
        <end position="69"/>
    </location>
</feature>
<feature type="domain" description="CSD">
    <location>
        <begin position="6"/>
        <end position="66"/>
    </location>
</feature>
<name>CSPC_SALTI</name>
<sequence>MAKIKGQVKWFNESKGFGFITPADGSKDVFVHFSAIQGNGFKTLAEGQNVEFEIQDGQKGPAAVNVTAI</sequence>
<keyword id="KW-0010">Activator</keyword>
<keyword id="KW-0963">Cytoplasm</keyword>
<keyword id="KW-0238">DNA-binding</keyword>
<keyword id="KW-0804">Transcription</keyword>
<keyword id="KW-0805">Transcription regulation</keyword>
<reference key="1">
    <citation type="journal article" date="2001" name="Nature">
        <title>Complete genome sequence of a multiple drug resistant Salmonella enterica serovar Typhi CT18.</title>
        <authorList>
            <person name="Parkhill J."/>
            <person name="Dougan G."/>
            <person name="James K.D."/>
            <person name="Thomson N.R."/>
            <person name="Pickard D."/>
            <person name="Wain J."/>
            <person name="Churcher C.M."/>
            <person name="Mungall K.L."/>
            <person name="Bentley S.D."/>
            <person name="Holden M.T.G."/>
            <person name="Sebaihia M."/>
            <person name="Baker S."/>
            <person name="Basham D."/>
            <person name="Brooks K."/>
            <person name="Chillingworth T."/>
            <person name="Connerton P."/>
            <person name="Cronin A."/>
            <person name="Davis P."/>
            <person name="Davies R.M."/>
            <person name="Dowd L."/>
            <person name="White N."/>
            <person name="Farrar J."/>
            <person name="Feltwell T."/>
            <person name="Hamlin N."/>
            <person name="Haque A."/>
            <person name="Hien T.T."/>
            <person name="Holroyd S."/>
            <person name="Jagels K."/>
            <person name="Krogh A."/>
            <person name="Larsen T.S."/>
            <person name="Leather S."/>
            <person name="Moule S."/>
            <person name="O'Gaora P."/>
            <person name="Parry C."/>
            <person name="Quail M.A."/>
            <person name="Rutherford K.M."/>
            <person name="Simmonds M."/>
            <person name="Skelton J."/>
            <person name="Stevens K."/>
            <person name="Whitehead S."/>
            <person name="Barrell B.G."/>
        </authorList>
    </citation>
    <scope>NUCLEOTIDE SEQUENCE [LARGE SCALE GENOMIC DNA]</scope>
    <source>
        <strain>CT18</strain>
    </source>
</reference>
<reference key="2">
    <citation type="journal article" date="2003" name="J. Bacteriol.">
        <title>Comparative genomics of Salmonella enterica serovar Typhi strains Ty2 and CT18.</title>
        <authorList>
            <person name="Deng W."/>
            <person name="Liou S.-R."/>
            <person name="Plunkett G. III"/>
            <person name="Mayhew G.F."/>
            <person name="Rose D.J."/>
            <person name="Burland V."/>
            <person name="Kodoyianni V."/>
            <person name="Schwartz D.C."/>
            <person name="Blattner F.R."/>
        </authorList>
    </citation>
    <scope>NUCLEOTIDE SEQUENCE [LARGE SCALE GENOMIC DNA]</scope>
    <source>
        <strain>ATCC 700931 / Ty2</strain>
    </source>
</reference>